<reference key="1">
    <citation type="journal article" date="2004" name="Science">
        <title>The Ashbya gossypii genome as a tool for mapping the ancient Saccharomyces cerevisiae genome.</title>
        <authorList>
            <person name="Dietrich F.S."/>
            <person name="Voegeli S."/>
            <person name="Brachat S."/>
            <person name="Lerch A."/>
            <person name="Gates K."/>
            <person name="Steiner S."/>
            <person name="Mohr C."/>
            <person name="Poehlmann R."/>
            <person name="Luedi P."/>
            <person name="Choi S."/>
            <person name="Wing R.A."/>
            <person name="Flavier A."/>
            <person name="Gaffney T.D."/>
            <person name="Philippsen P."/>
        </authorList>
    </citation>
    <scope>NUCLEOTIDE SEQUENCE [LARGE SCALE GENOMIC DNA]</scope>
    <source>
        <strain>ATCC 10895 / CBS 109.51 / FGSC 9923 / NRRL Y-1056</strain>
    </source>
</reference>
<reference key="2">
    <citation type="journal article" date="2013" name="G3 (Bethesda)">
        <title>Genomes of Ashbya fungi isolated from insects reveal four mating-type loci, numerous translocations, lack of transposons, and distinct gene duplications.</title>
        <authorList>
            <person name="Dietrich F.S."/>
            <person name="Voegeli S."/>
            <person name="Kuo S."/>
            <person name="Philippsen P."/>
        </authorList>
    </citation>
    <scope>GENOME REANNOTATION</scope>
    <scope>SEQUENCE REVISION TO 55 AND 1022-1023</scope>
    <source>
        <strain>ATCC 10895 / CBS 109.51 / FGSC 9923 / NRRL Y-1056</strain>
    </source>
</reference>
<accession>Q756A7</accession>
<organism>
    <name type="scientific">Eremothecium gossypii (strain ATCC 10895 / CBS 109.51 / FGSC 9923 / NRRL Y-1056)</name>
    <name type="common">Yeast</name>
    <name type="synonym">Ashbya gossypii</name>
    <dbReference type="NCBI Taxonomy" id="284811"/>
    <lineage>
        <taxon>Eukaryota</taxon>
        <taxon>Fungi</taxon>
        <taxon>Dikarya</taxon>
        <taxon>Ascomycota</taxon>
        <taxon>Saccharomycotina</taxon>
        <taxon>Saccharomycetes</taxon>
        <taxon>Saccharomycetales</taxon>
        <taxon>Saccharomycetaceae</taxon>
        <taxon>Eremothecium</taxon>
    </lineage>
</organism>
<feature type="chain" id="PRO_0000245178" description="FACT complex subunit SPT16">
    <location>
        <begin position="1"/>
        <end position="1031"/>
    </location>
</feature>
<feature type="region of interest" description="Disordered" evidence="3">
    <location>
        <begin position="450"/>
        <end position="501"/>
    </location>
</feature>
<feature type="region of interest" description="Disordered" evidence="3">
    <location>
        <begin position="952"/>
        <end position="1031"/>
    </location>
</feature>
<feature type="coiled-coil region" evidence="2">
    <location>
        <begin position="478"/>
        <end position="499"/>
    </location>
</feature>
<feature type="compositionally biased region" description="Basic and acidic residues" evidence="3">
    <location>
        <begin position="450"/>
        <end position="460"/>
    </location>
</feature>
<feature type="compositionally biased region" description="Basic and acidic residues" evidence="3">
    <location>
        <begin position="491"/>
        <end position="501"/>
    </location>
</feature>
<feature type="compositionally biased region" description="Acidic residues" evidence="3">
    <location>
        <begin position="953"/>
        <end position="1015"/>
    </location>
</feature>
<feature type="compositionally biased region" description="Basic and acidic residues" evidence="3">
    <location>
        <begin position="1016"/>
        <end position="1031"/>
    </location>
</feature>
<feature type="helix" evidence="5">
    <location>
        <begin position="8"/>
        <end position="21"/>
    </location>
</feature>
<feature type="helix" evidence="5">
    <location>
        <begin position="22"/>
        <end position="24"/>
    </location>
</feature>
<feature type="strand" evidence="5">
    <location>
        <begin position="30"/>
        <end position="36"/>
    </location>
</feature>
<feature type="helix" evidence="5">
    <location>
        <begin position="47"/>
        <end position="56"/>
    </location>
</feature>
<feature type="strand" evidence="5">
    <location>
        <begin position="61"/>
        <end position="67"/>
    </location>
</feature>
<feature type="strand" evidence="5">
    <location>
        <begin position="69"/>
        <end position="76"/>
    </location>
</feature>
<feature type="helix" evidence="5">
    <location>
        <begin position="78"/>
        <end position="94"/>
    </location>
</feature>
<feature type="turn" evidence="5">
    <location>
        <begin position="95"/>
        <end position="98"/>
    </location>
</feature>
<feature type="strand" evidence="5">
    <location>
        <begin position="100"/>
        <end position="105"/>
    </location>
</feature>
<feature type="helix" evidence="5">
    <location>
        <begin position="112"/>
        <end position="127"/>
    </location>
</feature>
<feature type="strand" evidence="5">
    <location>
        <begin position="129"/>
        <end position="133"/>
    </location>
</feature>
<feature type="helix" evidence="5">
    <location>
        <begin position="142"/>
        <end position="157"/>
    </location>
</feature>
<feature type="strand" evidence="5">
    <location>
        <begin position="161"/>
        <end position="164"/>
    </location>
</feature>
<feature type="helix" evidence="5">
    <location>
        <begin position="166"/>
        <end position="173"/>
    </location>
</feature>
<feature type="helix" evidence="5">
    <location>
        <begin position="178"/>
        <end position="207"/>
    </location>
</feature>
<feature type="helix" evidence="5">
    <location>
        <begin position="214"/>
        <end position="223"/>
    </location>
</feature>
<feature type="helix" evidence="5">
    <location>
        <begin position="224"/>
        <end position="226"/>
    </location>
</feature>
<feature type="helix" evidence="5">
    <location>
        <begin position="228"/>
        <end position="232"/>
    </location>
</feature>
<feature type="helix" evidence="5">
    <location>
        <begin position="235"/>
        <end position="238"/>
    </location>
</feature>
<feature type="helix" evidence="5">
    <location>
        <begin position="239"/>
        <end position="241"/>
    </location>
</feature>
<feature type="helix" evidence="5">
    <location>
        <begin position="250"/>
        <end position="252"/>
    </location>
</feature>
<feature type="strand" evidence="5">
    <location>
        <begin position="253"/>
        <end position="257"/>
    </location>
</feature>
<feature type="strand" evidence="5">
    <location>
        <begin position="260"/>
        <end position="262"/>
    </location>
</feature>
<feature type="strand" evidence="5">
    <location>
        <begin position="264"/>
        <end position="266"/>
    </location>
</feature>
<feature type="strand" evidence="5">
    <location>
        <begin position="277"/>
        <end position="279"/>
    </location>
</feature>
<feature type="strand" evidence="5">
    <location>
        <begin position="283"/>
        <end position="290"/>
    </location>
</feature>
<feature type="strand" evidence="5">
    <location>
        <begin position="292"/>
        <end position="294"/>
    </location>
</feature>
<feature type="strand" evidence="5">
    <location>
        <begin position="301"/>
        <end position="308"/>
    </location>
</feature>
<feature type="helix" evidence="5">
    <location>
        <begin position="311"/>
        <end position="329"/>
    </location>
</feature>
<feature type="helix" evidence="5">
    <location>
        <begin position="338"/>
        <end position="352"/>
    </location>
</feature>
<feature type="helix" evidence="5">
    <location>
        <begin position="354"/>
        <end position="356"/>
    </location>
</feature>
<feature type="turn" evidence="5">
    <location>
        <begin position="357"/>
        <end position="359"/>
    </location>
</feature>
<feature type="strand" evidence="5">
    <location>
        <begin position="362"/>
        <end position="367"/>
    </location>
</feature>
<feature type="strand" evidence="5">
    <location>
        <begin position="369"/>
        <end position="373"/>
    </location>
</feature>
<feature type="strand" evidence="5">
    <location>
        <begin position="377"/>
        <end position="382"/>
    </location>
</feature>
<feature type="strand" evidence="5">
    <location>
        <begin position="393"/>
        <end position="404"/>
    </location>
</feature>
<feature type="turn" evidence="5">
    <location>
        <begin position="406"/>
        <end position="408"/>
    </location>
</feature>
<feature type="strand" evidence="5">
    <location>
        <begin position="411"/>
        <end position="423"/>
    </location>
</feature>
<feature type="strand" evidence="5">
    <location>
        <begin position="426"/>
        <end position="429"/>
    </location>
</feature>
<feature type="helix" evidence="5">
    <location>
        <begin position="437"/>
        <end position="440"/>
    </location>
</feature>
<name>SPT16_EREGS</name>
<proteinExistence type="evidence at protein level"/>
<dbReference type="EMBL" id="AE016818">
    <property type="protein sequence ID" value="AAS53040.2"/>
    <property type="molecule type" value="Genomic_DNA"/>
</dbReference>
<dbReference type="RefSeq" id="NP_985216.2">
    <property type="nucleotide sequence ID" value="NM_210570.2"/>
</dbReference>
<dbReference type="PDB" id="6A8M">
    <property type="method" value="X-ray"/>
    <property type="resolution" value="1.70 A"/>
    <property type="chains" value="A=2-460"/>
</dbReference>
<dbReference type="PDBsum" id="6A8M"/>
<dbReference type="SMR" id="Q756A7"/>
<dbReference type="FunCoup" id="Q756A7">
    <property type="interactions" value="1500"/>
</dbReference>
<dbReference type="STRING" id="284811.Q756A7"/>
<dbReference type="EnsemblFungi" id="AAS53040">
    <property type="protein sequence ID" value="AAS53040"/>
    <property type="gene ID" value="AGOS_AER360C"/>
</dbReference>
<dbReference type="GeneID" id="4621432"/>
<dbReference type="KEGG" id="ago:AGOS_AER360C"/>
<dbReference type="eggNOG" id="KOG1189">
    <property type="taxonomic scope" value="Eukaryota"/>
</dbReference>
<dbReference type="HOGENOM" id="CLU_004627_1_0_1"/>
<dbReference type="InParanoid" id="Q756A7"/>
<dbReference type="OMA" id="YHINTIP"/>
<dbReference type="OrthoDB" id="10251642at2759"/>
<dbReference type="Proteomes" id="UP000000591">
    <property type="component" value="Chromosome V"/>
</dbReference>
<dbReference type="GO" id="GO:0035101">
    <property type="term" value="C:FACT complex"/>
    <property type="evidence" value="ECO:0000318"/>
    <property type="project" value="GO_Central"/>
</dbReference>
<dbReference type="GO" id="GO:0042393">
    <property type="term" value="F:histone binding"/>
    <property type="evidence" value="ECO:0007669"/>
    <property type="project" value="EnsemblFungi"/>
</dbReference>
<dbReference type="GO" id="GO:0140713">
    <property type="term" value="F:histone chaperone activity"/>
    <property type="evidence" value="ECO:0007669"/>
    <property type="project" value="EnsemblFungi"/>
</dbReference>
<dbReference type="GO" id="GO:0031491">
    <property type="term" value="F:nucleosome binding"/>
    <property type="evidence" value="ECO:0000318"/>
    <property type="project" value="GO_Central"/>
</dbReference>
<dbReference type="GO" id="GO:0140719">
    <property type="term" value="P:constitutive heterochromatin formation"/>
    <property type="evidence" value="ECO:0007669"/>
    <property type="project" value="EnsemblFungi"/>
</dbReference>
<dbReference type="GO" id="GO:0006281">
    <property type="term" value="P:DNA repair"/>
    <property type="evidence" value="ECO:0007669"/>
    <property type="project" value="UniProtKB-KW"/>
</dbReference>
<dbReference type="GO" id="GO:0006261">
    <property type="term" value="P:DNA-templated DNA replication"/>
    <property type="evidence" value="ECO:0007669"/>
    <property type="project" value="EnsemblFungi"/>
</dbReference>
<dbReference type="GO" id="GO:0006334">
    <property type="term" value="P:nucleosome assembly"/>
    <property type="evidence" value="ECO:0007669"/>
    <property type="project" value="EnsemblFungi"/>
</dbReference>
<dbReference type="GO" id="GO:0045899">
    <property type="term" value="P:positive regulation of RNA polymerase II transcription preinitiation complex assembly"/>
    <property type="evidence" value="ECO:0007669"/>
    <property type="project" value="EnsemblFungi"/>
</dbReference>
<dbReference type="GO" id="GO:0007063">
    <property type="term" value="P:regulation of sister chromatid cohesion"/>
    <property type="evidence" value="ECO:0007669"/>
    <property type="project" value="EnsemblFungi"/>
</dbReference>
<dbReference type="GO" id="GO:0006368">
    <property type="term" value="P:transcription elongation by RNA polymerase II"/>
    <property type="evidence" value="ECO:0000318"/>
    <property type="project" value="GO_Central"/>
</dbReference>
<dbReference type="FunFam" id="2.30.29.150:FF:000002">
    <property type="entry name" value="FACT complex subunit SPT16"/>
    <property type="match status" value="1"/>
</dbReference>
<dbReference type="FunFam" id="2.30.29.30:FF:000017">
    <property type="entry name" value="FACT complex subunit SPT16"/>
    <property type="match status" value="1"/>
</dbReference>
<dbReference type="FunFam" id="3.40.350.10:FF:000006">
    <property type="entry name" value="FACT complex subunit SPT16"/>
    <property type="match status" value="1"/>
</dbReference>
<dbReference type="FunFam" id="2.30.29.210:FF:000001">
    <property type="entry name" value="FACT complex subunit spt16"/>
    <property type="match status" value="1"/>
</dbReference>
<dbReference type="FunFam" id="3.90.230.10:FF:000005">
    <property type="entry name" value="FACT complex subunit spt16"/>
    <property type="match status" value="1"/>
</dbReference>
<dbReference type="Gene3D" id="2.30.29.150">
    <property type="match status" value="1"/>
</dbReference>
<dbReference type="Gene3D" id="3.90.230.10">
    <property type="entry name" value="Creatinase/methionine aminopeptidase superfamily"/>
    <property type="match status" value="1"/>
</dbReference>
<dbReference type="Gene3D" id="3.40.350.10">
    <property type="entry name" value="Creatinase/prolidase N-terminal domain"/>
    <property type="match status" value="1"/>
</dbReference>
<dbReference type="Gene3D" id="2.30.29.210">
    <property type="entry name" value="FACT complex subunit Spt16p/Cdc68p"/>
    <property type="match status" value="1"/>
</dbReference>
<dbReference type="Gene3D" id="2.30.29.30">
    <property type="entry name" value="Pleckstrin-homology domain (PH domain)/Phosphotyrosine-binding domain (PTB)"/>
    <property type="match status" value="1"/>
</dbReference>
<dbReference type="InterPro" id="IPR029149">
    <property type="entry name" value="Creatin/AminoP/Spt16_N"/>
</dbReference>
<dbReference type="InterPro" id="IPR036005">
    <property type="entry name" value="Creatinase/aminopeptidase-like"/>
</dbReference>
<dbReference type="InterPro" id="IPR029148">
    <property type="entry name" value="FACT-SPT16_Nlobe"/>
</dbReference>
<dbReference type="InterPro" id="IPR056595">
    <property type="entry name" value="Fact-SPT16_PH"/>
</dbReference>
<dbReference type="InterPro" id="IPR048969">
    <property type="entry name" value="FACT_SPT16_C"/>
</dbReference>
<dbReference type="InterPro" id="IPR013953">
    <property type="entry name" value="FACT_SPT16_M"/>
</dbReference>
<dbReference type="InterPro" id="IPR000994">
    <property type="entry name" value="Pept_M24"/>
</dbReference>
<dbReference type="InterPro" id="IPR011993">
    <property type="entry name" value="PH-like_dom_sf"/>
</dbReference>
<dbReference type="InterPro" id="IPR013719">
    <property type="entry name" value="RTT106/SPT16-like_middle_dom"/>
</dbReference>
<dbReference type="InterPro" id="IPR040258">
    <property type="entry name" value="Spt16"/>
</dbReference>
<dbReference type="PANTHER" id="PTHR13980">
    <property type="entry name" value="CDC68 RELATED"/>
    <property type="match status" value="1"/>
</dbReference>
<dbReference type="PANTHER" id="PTHR13980:SF15">
    <property type="entry name" value="FACT COMPLEX SUBUNIT SPT16"/>
    <property type="match status" value="1"/>
</dbReference>
<dbReference type="Pfam" id="PF14826">
    <property type="entry name" value="FACT-Spt16_Nlob"/>
    <property type="match status" value="1"/>
</dbReference>
<dbReference type="Pfam" id="PF00557">
    <property type="entry name" value="Peptidase_M24"/>
    <property type="match status" value="1"/>
</dbReference>
<dbReference type="Pfam" id="PF24824">
    <property type="entry name" value="PH_SPT16"/>
    <property type="match status" value="1"/>
</dbReference>
<dbReference type="Pfam" id="PF08512">
    <property type="entry name" value="Rttp106-like_middle"/>
    <property type="match status" value="1"/>
</dbReference>
<dbReference type="Pfam" id="PF08644">
    <property type="entry name" value="SPT16"/>
    <property type="match status" value="1"/>
</dbReference>
<dbReference type="Pfam" id="PF21091">
    <property type="entry name" value="SPT16_C"/>
    <property type="match status" value="1"/>
</dbReference>
<dbReference type="SMART" id="SM01285">
    <property type="entry name" value="FACT-Spt16_Nlob"/>
    <property type="match status" value="1"/>
</dbReference>
<dbReference type="SMART" id="SM01287">
    <property type="entry name" value="Rtt106"/>
    <property type="match status" value="1"/>
</dbReference>
<dbReference type="SMART" id="SM01286">
    <property type="entry name" value="SPT16"/>
    <property type="match status" value="1"/>
</dbReference>
<dbReference type="SUPFAM" id="SSF55920">
    <property type="entry name" value="Creatinase/aminopeptidase"/>
    <property type="match status" value="1"/>
</dbReference>
<keyword id="KW-0002">3D-structure</keyword>
<keyword id="KW-0158">Chromosome</keyword>
<keyword id="KW-0175">Coiled coil</keyword>
<keyword id="KW-0227">DNA damage</keyword>
<keyword id="KW-0234">DNA repair</keyword>
<keyword id="KW-0235">DNA replication</keyword>
<keyword id="KW-0539">Nucleus</keyword>
<keyword id="KW-1185">Reference proteome</keyword>
<keyword id="KW-0804">Transcription</keyword>
<keyword id="KW-0805">Transcription regulation</keyword>
<evidence type="ECO:0000250" key="1"/>
<evidence type="ECO:0000255" key="2"/>
<evidence type="ECO:0000256" key="3">
    <source>
        <dbReference type="SAM" id="MobiDB-lite"/>
    </source>
</evidence>
<evidence type="ECO:0000305" key="4"/>
<evidence type="ECO:0007829" key="5">
    <source>
        <dbReference type="PDB" id="6A8M"/>
    </source>
</evidence>
<comment type="function">
    <text evidence="1">Component of the FACT complex, a general chromatin factor that acts to reorganize nucleosomes. The FACT complex is involved in multiple processes that require DNA as a template such as mRNA elongation, DNA replication and DNA repair. During transcription elongation the FACT complex acts as a histone chaperone that both destabilizes and restores nucleosomal structure. It facilitates the passage of RNA polymerase II and transcription by promoting the dissociation of one histone H2A-H2B dimer from the nucleosome, then subsequently promotes the reestablishment of the nucleosome following the passage of RNA polymerase II (By similarity).</text>
</comment>
<comment type="subunit">
    <text evidence="1">Forms a stable heterodimer with POB3. The SPT16-POB3 dimer weakly associates with multiple molecules of NHP6 to form the FACT complex (By similarity).</text>
</comment>
<comment type="subcellular location">
    <subcellularLocation>
        <location evidence="1">Nucleus</location>
    </subcellularLocation>
    <subcellularLocation>
        <location evidence="1">Chromosome</location>
    </subcellularLocation>
</comment>
<comment type="similarity">
    <text evidence="4">Belongs to the peptidase M24 family. SPT16 subfamily.</text>
</comment>
<comment type="caution">
    <text evidence="4">Although related to the peptidase M24 family, this protein lacks conserved active site residues suggesting that it may lack peptidase activity.</text>
</comment>
<sequence>MSEVIIDFSTFENRLLALRDRFPSFDGSPSSLVFILGSADEENPYQKTTILHNWLLGYEFPTTLIAVFKEGCVVITSAAKTRYLEEGVAQMNKKLENTFKIELWQSSKEPGHNLKLFEDLVERVREAGSAVGLATKDSYQGKFITEWKGVWDTAVEKHGLNGVDVSLGLSSLWAVKDEKEQAYLQVSSRGSDKFMNLLSDELVRAVDEEIKITDAKLSDNVENEIDKSRFLKKLSPELTPLCPKGEKFDVNYLDWAYSPIIQSGPKYDLRVSARSSETQLDGNGCILASCGIRYKNYCSNISRTFLIDPSDEMTDNYDFLLLLQEEIINNLLRVGATPKQIYDGAVNYINSKKPELSAGFTKNVGSLMGLEFRDSQFVLNNKNDYRKVENGDCFNISLGFNNLKDSKTGASYALQLADTVQLTSGGPKVLTNYTKSRSQISFYFNNEDDGTTKVKSEESKTASIPTKPDPKSKILRSKLRGESRAEDDEKEQIRKENQRKLHEKLQREGLLRFTDTDAADKDQKPVVHFKKYESYVRETQIPNTVRDLRIHVDWKNQTFILPIYGRPVPFHINSYKNGSKNEEGEYTYIRLNFHSPGTGGVSKKTEELPYEDSPDHQFVRSLTLRSKDGDRMADIFKQITELKKESTKREQERKVLADVVEQAKLVENRTGRTKRLDQIFVRPSPDTKRVPGTVFIHENGIRYQSPLRTDSRIDILFSNVKNLFFQPCKGELIVIIHIHLKNPILMGKKKIQDVQFYREASDMAVDETGNGRRNQMKFRRYGDEDELEQEQEERRKRAALDKEFRYFAEAIAEASNGLVEVDHPFRDLGFQGVPSRSAVFCMPTRDCLIQLVEPPFLVVNLSEVEICILERVQFGLKNFDMVFVYKDFTKPVTHINTIPIEQLEFIKSWLTDVDIPYTVSTINLNWATIMKSLQDDPHQFFLDGGWSFLATGSDDEMSGTSEEEVSEYEVSDEDPSDEEVDSEDDYSEGDNEEFSDEGSEDFSGEESEEGEDWDELEKKAAKADRGNRFAD</sequence>
<gene>
    <name type="primary">SPT16</name>
    <name type="ordered locus">AER360C</name>
</gene>
<protein>
    <recommendedName>
        <fullName>FACT complex subunit SPT16</fullName>
    </recommendedName>
    <alternativeName>
        <fullName>Facilitates chromatin transcription complex subunit SPT16</fullName>
    </alternativeName>
</protein>